<feature type="chain" id="PRO_1000096402" description="dCTP deaminase">
    <location>
        <begin position="1"/>
        <end position="188"/>
    </location>
</feature>
<feature type="active site" description="Proton donor/acceptor" evidence="1">
    <location>
        <position position="137"/>
    </location>
</feature>
<feature type="binding site" evidence="1">
    <location>
        <begin position="111"/>
        <end position="116"/>
    </location>
    <ligand>
        <name>dCTP</name>
        <dbReference type="ChEBI" id="CHEBI:61481"/>
    </ligand>
</feature>
<feature type="binding site" evidence="1">
    <location>
        <begin position="135"/>
        <end position="137"/>
    </location>
    <ligand>
        <name>dCTP</name>
        <dbReference type="ChEBI" id="CHEBI:61481"/>
    </ligand>
</feature>
<feature type="binding site" evidence="1">
    <location>
        <position position="156"/>
    </location>
    <ligand>
        <name>dCTP</name>
        <dbReference type="ChEBI" id="CHEBI:61481"/>
    </ligand>
</feature>
<feature type="binding site" evidence="1">
    <location>
        <position position="170"/>
    </location>
    <ligand>
        <name>dCTP</name>
        <dbReference type="ChEBI" id="CHEBI:61481"/>
    </ligand>
</feature>
<feature type="binding site" evidence="1">
    <location>
        <position position="180"/>
    </location>
    <ligand>
        <name>dCTP</name>
        <dbReference type="ChEBI" id="CHEBI:61481"/>
    </ligand>
</feature>
<gene>
    <name evidence="1" type="primary">dcd</name>
    <name type="ordered locus">Lferr_2286</name>
</gene>
<protein>
    <recommendedName>
        <fullName evidence="1">dCTP deaminase</fullName>
        <ecNumber evidence="1">3.5.4.13</ecNumber>
    </recommendedName>
    <alternativeName>
        <fullName evidence="1">Deoxycytidine triphosphate deaminase</fullName>
    </alternativeName>
</protein>
<dbReference type="EC" id="3.5.4.13" evidence="1"/>
<dbReference type="EMBL" id="CP001132">
    <property type="protein sequence ID" value="ACH84487.1"/>
    <property type="molecule type" value="Genomic_DNA"/>
</dbReference>
<dbReference type="RefSeq" id="WP_012537322.1">
    <property type="nucleotide sequence ID" value="NC_011206.1"/>
</dbReference>
<dbReference type="SMR" id="B5EN98"/>
<dbReference type="GeneID" id="65281705"/>
<dbReference type="KEGG" id="afe:Lferr_2286"/>
<dbReference type="eggNOG" id="COG0717">
    <property type="taxonomic scope" value="Bacteria"/>
</dbReference>
<dbReference type="HOGENOM" id="CLU_087476_4_0_6"/>
<dbReference type="UniPathway" id="UPA00610">
    <property type="reaction ID" value="UER00665"/>
</dbReference>
<dbReference type="GO" id="GO:0008829">
    <property type="term" value="F:dCTP deaminase activity"/>
    <property type="evidence" value="ECO:0007669"/>
    <property type="project" value="UniProtKB-UniRule"/>
</dbReference>
<dbReference type="GO" id="GO:0000166">
    <property type="term" value="F:nucleotide binding"/>
    <property type="evidence" value="ECO:0007669"/>
    <property type="project" value="UniProtKB-KW"/>
</dbReference>
<dbReference type="GO" id="GO:0006226">
    <property type="term" value="P:dUMP biosynthetic process"/>
    <property type="evidence" value="ECO:0007669"/>
    <property type="project" value="UniProtKB-UniPathway"/>
</dbReference>
<dbReference type="GO" id="GO:0006229">
    <property type="term" value="P:dUTP biosynthetic process"/>
    <property type="evidence" value="ECO:0007669"/>
    <property type="project" value="UniProtKB-UniRule"/>
</dbReference>
<dbReference type="GO" id="GO:0015949">
    <property type="term" value="P:nucleobase-containing small molecule interconversion"/>
    <property type="evidence" value="ECO:0007669"/>
    <property type="project" value="TreeGrafter"/>
</dbReference>
<dbReference type="CDD" id="cd07557">
    <property type="entry name" value="trimeric_dUTPase"/>
    <property type="match status" value="1"/>
</dbReference>
<dbReference type="FunFam" id="2.70.40.10:FF:000001">
    <property type="entry name" value="dCTP deaminase"/>
    <property type="match status" value="1"/>
</dbReference>
<dbReference type="Gene3D" id="2.70.40.10">
    <property type="match status" value="1"/>
</dbReference>
<dbReference type="HAMAP" id="MF_00146">
    <property type="entry name" value="dCTP_deaminase"/>
    <property type="match status" value="1"/>
</dbReference>
<dbReference type="InterPro" id="IPR011962">
    <property type="entry name" value="dCTP_deaminase"/>
</dbReference>
<dbReference type="InterPro" id="IPR036157">
    <property type="entry name" value="dUTPase-like_sf"/>
</dbReference>
<dbReference type="InterPro" id="IPR033704">
    <property type="entry name" value="dUTPase_trimeric"/>
</dbReference>
<dbReference type="NCBIfam" id="TIGR02274">
    <property type="entry name" value="dCTP_deam"/>
    <property type="match status" value="1"/>
</dbReference>
<dbReference type="PANTHER" id="PTHR42680">
    <property type="entry name" value="DCTP DEAMINASE"/>
    <property type="match status" value="1"/>
</dbReference>
<dbReference type="PANTHER" id="PTHR42680:SF3">
    <property type="entry name" value="DCTP DEAMINASE"/>
    <property type="match status" value="1"/>
</dbReference>
<dbReference type="Pfam" id="PF22769">
    <property type="entry name" value="DCD"/>
    <property type="match status" value="1"/>
</dbReference>
<dbReference type="SUPFAM" id="SSF51283">
    <property type="entry name" value="dUTPase-like"/>
    <property type="match status" value="1"/>
</dbReference>
<keyword id="KW-0378">Hydrolase</keyword>
<keyword id="KW-0546">Nucleotide metabolism</keyword>
<keyword id="KW-0547">Nucleotide-binding</keyword>
<organism>
    <name type="scientific">Acidithiobacillus ferrooxidans (strain ATCC 53993 / BNL-5-31)</name>
    <name type="common">Leptospirillum ferrooxidans (ATCC 53993)</name>
    <dbReference type="NCBI Taxonomy" id="380394"/>
    <lineage>
        <taxon>Bacteria</taxon>
        <taxon>Pseudomonadati</taxon>
        <taxon>Pseudomonadota</taxon>
        <taxon>Acidithiobacillia</taxon>
        <taxon>Acidithiobacillales</taxon>
        <taxon>Acidithiobacillaceae</taxon>
        <taxon>Acidithiobacillus</taxon>
    </lineage>
</organism>
<proteinExistence type="inferred from homology"/>
<comment type="function">
    <text evidence="1">Catalyzes the deamination of dCTP to dUTP.</text>
</comment>
<comment type="catalytic activity">
    <reaction evidence="1">
        <text>dCTP + H2O + H(+) = dUTP + NH4(+)</text>
        <dbReference type="Rhea" id="RHEA:22680"/>
        <dbReference type="ChEBI" id="CHEBI:15377"/>
        <dbReference type="ChEBI" id="CHEBI:15378"/>
        <dbReference type="ChEBI" id="CHEBI:28938"/>
        <dbReference type="ChEBI" id="CHEBI:61481"/>
        <dbReference type="ChEBI" id="CHEBI:61555"/>
        <dbReference type="EC" id="3.5.4.13"/>
    </reaction>
</comment>
<comment type="pathway">
    <text evidence="1">Pyrimidine metabolism; dUMP biosynthesis; dUMP from dCTP (dUTP route): step 1/2.</text>
</comment>
<comment type="subunit">
    <text evidence="1">Homotrimer.</text>
</comment>
<comment type="similarity">
    <text evidence="1">Belongs to the dCTP deaminase family.</text>
</comment>
<name>DCD_ACIF5</name>
<reference key="1">
    <citation type="submission" date="2008-08" db="EMBL/GenBank/DDBJ databases">
        <title>Complete sequence of Acidithiobacillus ferrooxidans ATCC 53993.</title>
        <authorList>
            <person name="Lucas S."/>
            <person name="Copeland A."/>
            <person name="Lapidus A."/>
            <person name="Glavina del Rio T."/>
            <person name="Dalin E."/>
            <person name="Tice H."/>
            <person name="Bruce D."/>
            <person name="Goodwin L."/>
            <person name="Pitluck S."/>
            <person name="Sims D."/>
            <person name="Brettin T."/>
            <person name="Detter J.C."/>
            <person name="Han C."/>
            <person name="Kuske C.R."/>
            <person name="Larimer F."/>
            <person name="Land M."/>
            <person name="Hauser L."/>
            <person name="Kyrpides N."/>
            <person name="Lykidis A."/>
            <person name="Borole A.P."/>
        </authorList>
    </citation>
    <scope>NUCLEOTIDE SEQUENCE [LARGE SCALE GENOMIC DNA]</scope>
    <source>
        <strain>ATCC 53993 / BNL-5-31</strain>
    </source>
</reference>
<sequence length="188" mass="21104">MSIKSDRWIRHMAEEHGMIEPFSPRQVRHVEGNSIISYGLSSYGYDIRCAGEFKVFTNVRSVIVDPKNFSEHSFVDFTGDTCIIPPNSFALARTLEYFRIPRNVLTICLGKSTYARCGIIVNVTPFEPEWEGYVTLEFSNTTPLPAKIYANEGVAQVLFLESDEVCEVSYADRGGKYQGQSGVTLPKA</sequence>
<evidence type="ECO:0000255" key="1">
    <source>
        <dbReference type="HAMAP-Rule" id="MF_00146"/>
    </source>
</evidence>
<accession>B5EN98</accession>